<sequence>MPKIDLFNQNGEKVGDLQLADSVFGVEVNTYAMHQVVKALLANKRQGTQSAKTRAEVSGGGIKPWRQKGTGRARQGSIRAPQWIHGGIVFAPKPRDYRMSIPKSMKKVAMKSALTSKVNEKLMVVVDDIKLETPKTKEVVKMLNSFDAKKTLIITNNAEENVYKSARNIEGVQIIPVNNINVYDLLKYDKVVITKDAVSKIEEVYA</sequence>
<reference key="1">
    <citation type="journal article" date="2007" name="PLoS ONE">
        <title>Analysis of the neurotoxin complex genes in Clostridium botulinum A1-A4 and B1 strains: BoNT/A3, /Ba4 and /B1 clusters are located within plasmids.</title>
        <authorList>
            <person name="Smith T.J."/>
            <person name="Hill K.K."/>
            <person name="Foley B.T."/>
            <person name="Detter J.C."/>
            <person name="Munk A.C."/>
            <person name="Bruce D.C."/>
            <person name="Doggett N.A."/>
            <person name="Smith L.A."/>
            <person name="Marks J.D."/>
            <person name="Xie G."/>
            <person name="Brettin T.S."/>
        </authorList>
    </citation>
    <scope>NUCLEOTIDE SEQUENCE [LARGE SCALE GENOMIC DNA]</scope>
    <source>
        <strain>Okra / Type B1</strain>
    </source>
</reference>
<proteinExistence type="inferred from homology"/>
<name>RL4_CLOBK</name>
<protein>
    <recommendedName>
        <fullName evidence="1">Large ribosomal subunit protein uL4</fullName>
    </recommendedName>
    <alternativeName>
        <fullName evidence="3">50S ribosomal protein L4</fullName>
    </alternativeName>
</protein>
<accession>B1IGF3</accession>
<keyword id="KW-0687">Ribonucleoprotein</keyword>
<keyword id="KW-0689">Ribosomal protein</keyword>
<keyword id="KW-0694">RNA-binding</keyword>
<keyword id="KW-0699">rRNA-binding</keyword>
<organism>
    <name type="scientific">Clostridium botulinum (strain Okra / Type B1)</name>
    <dbReference type="NCBI Taxonomy" id="498213"/>
    <lineage>
        <taxon>Bacteria</taxon>
        <taxon>Bacillati</taxon>
        <taxon>Bacillota</taxon>
        <taxon>Clostridia</taxon>
        <taxon>Eubacteriales</taxon>
        <taxon>Clostridiaceae</taxon>
        <taxon>Clostridium</taxon>
    </lineage>
</organism>
<comment type="function">
    <text evidence="1">One of the primary rRNA binding proteins, this protein initially binds near the 5'-end of the 23S rRNA. It is important during the early stages of 50S assembly. It makes multiple contacts with different domains of the 23S rRNA in the assembled 50S subunit and ribosome.</text>
</comment>
<comment type="function">
    <text evidence="1">Forms part of the polypeptide exit tunnel.</text>
</comment>
<comment type="subunit">
    <text evidence="1">Part of the 50S ribosomal subunit.</text>
</comment>
<comment type="similarity">
    <text evidence="1">Belongs to the universal ribosomal protein uL4 family.</text>
</comment>
<evidence type="ECO:0000255" key="1">
    <source>
        <dbReference type="HAMAP-Rule" id="MF_01328"/>
    </source>
</evidence>
<evidence type="ECO:0000256" key="2">
    <source>
        <dbReference type="SAM" id="MobiDB-lite"/>
    </source>
</evidence>
<evidence type="ECO:0000305" key="3"/>
<gene>
    <name evidence="1" type="primary">rplD</name>
    <name type="ordered locus">CLD_1025</name>
</gene>
<feature type="chain" id="PRO_1000142106" description="Large ribosomal subunit protein uL4">
    <location>
        <begin position="1"/>
        <end position="206"/>
    </location>
</feature>
<feature type="region of interest" description="Disordered" evidence="2">
    <location>
        <begin position="47"/>
        <end position="76"/>
    </location>
</feature>
<dbReference type="EMBL" id="CP000939">
    <property type="protein sequence ID" value="ACA43637.1"/>
    <property type="molecule type" value="Genomic_DNA"/>
</dbReference>
<dbReference type="RefSeq" id="WP_015957456.1">
    <property type="nucleotide sequence ID" value="NC_010516.1"/>
</dbReference>
<dbReference type="SMR" id="B1IGF3"/>
<dbReference type="KEGG" id="cbb:CLD_1025"/>
<dbReference type="HOGENOM" id="CLU_041575_5_2_9"/>
<dbReference type="Proteomes" id="UP000008541">
    <property type="component" value="Chromosome"/>
</dbReference>
<dbReference type="GO" id="GO:1990904">
    <property type="term" value="C:ribonucleoprotein complex"/>
    <property type="evidence" value="ECO:0007669"/>
    <property type="project" value="UniProtKB-KW"/>
</dbReference>
<dbReference type="GO" id="GO:0005840">
    <property type="term" value="C:ribosome"/>
    <property type="evidence" value="ECO:0007669"/>
    <property type="project" value="UniProtKB-KW"/>
</dbReference>
<dbReference type="GO" id="GO:0019843">
    <property type="term" value="F:rRNA binding"/>
    <property type="evidence" value="ECO:0007669"/>
    <property type="project" value="UniProtKB-UniRule"/>
</dbReference>
<dbReference type="GO" id="GO:0003735">
    <property type="term" value="F:structural constituent of ribosome"/>
    <property type="evidence" value="ECO:0007669"/>
    <property type="project" value="InterPro"/>
</dbReference>
<dbReference type="GO" id="GO:0006412">
    <property type="term" value="P:translation"/>
    <property type="evidence" value="ECO:0007669"/>
    <property type="project" value="UniProtKB-UniRule"/>
</dbReference>
<dbReference type="FunFam" id="3.40.1370.10:FF:000003">
    <property type="entry name" value="50S ribosomal protein L4"/>
    <property type="match status" value="1"/>
</dbReference>
<dbReference type="Gene3D" id="3.40.1370.10">
    <property type="match status" value="1"/>
</dbReference>
<dbReference type="HAMAP" id="MF_01328_B">
    <property type="entry name" value="Ribosomal_uL4_B"/>
    <property type="match status" value="1"/>
</dbReference>
<dbReference type="InterPro" id="IPR002136">
    <property type="entry name" value="Ribosomal_uL4"/>
</dbReference>
<dbReference type="InterPro" id="IPR013005">
    <property type="entry name" value="Ribosomal_uL4-like"/>
</dbReference>
<dbReference type="InterPro" id="IPR023574">
    <property type="entry name" value="Ribosomal_uL4_dom_sf"/>
</dbReference>
<dbReference type="NCBIfam" id="TIGR03953">
    <property type="entry name" value="rplD_bact"/>
    <property type="match status" value="1"/>
</dbReference>
<dbReference type="PANTHER" id="PTHR10746">
    <property type="entry name" value="50S RIBOSOMAL PROTEIN L4"/>
    <property type="match status" value="1"/>
</dbReference>
<dbReference type="PANTHER" id="PTHR10746:SF6">
    <property type="entry name" value="LARGE RIBOSOMAL SUBUNIT PROTEIN UL4M"/>
    <property type="match status" value="1"/>
</dbReference>
<dbReference type="Pfam" id="PF00573">
    <property type="entry name" value="Ribosomal_L4"/>
    <property type="match status" value="1"/>
</dbReference>
<dbReference type="SUPFAM" id="SSF52166">
    <property type="entry name" value="Ribosomal protein L4"/>
    <property type="match status" value="1"/>
</dbReference>